<accession>B3CSS5</accession>
<keyword id="KW-0030">Aminoacyl-tRNA synthetase</keyword>
<keyword id="KW-0067">ATP-binding</keyword>
<keyword id="KW-0963">Cytoplasm</keyword>
<keyword id="KW-0436">Ligase</keyword>
<keyword id="KW-0479">Metal-binding</keyword>
<keyword id="KW-0547">Nucleotide-binding</keyword>
<keyword id="KW-0648">Protein biosynthesis</keyword>
<keyword id="KW-0694">RNA-binding</keyword>
<keyword id="KW-0820">tRNA-binding</keyword>
<keyword id="KW-0862">Zinc</keyword>
<sequence>MIDIILPDGSVKQYKIGVTGQEIIQSLSISLFKKTIAVAVNNELMDLYIPIINTATVKAITIDSVQGIEILRHDTAHILAQAVKKLFPDTQVVIGPVIKDGFYYDFARDKPFTSKDLEIIEQEMQDIITKNDLIQREVWLRAKAIEFFKQQKEFYKVKLIEEIPESEEISIYRQGNFVDLCRGPHSPSTGYCAKYFKLTKVSGAYWRGNSKNESLQRIYGTAWGKKSDLDSYLHRLSEAQKRDHRKLGRELELFHFQDEAQGMPFWHSKGWTIFKIIKDYISCQIQRAGYIEVNTPMVLNQKLWEKSGHWEKFRENMFTLDTNAAEQDHNLIKDSIETKCALALKPMNCPGHIQIFNYTIKSYRDLPLRMAEFGSCHRYEPSGALYGLMRVRSFVQDDAHIFCTEDQITDETIKFCHLLKQVYQDFGFPEVKIKFSDRPEKRAGTDKIWDKAEQALIHAIQTLGEEYTINRGEGAFYGPKLEFILTDAIGREWQCGTLQVDFVLPERLNASYISSEGSKKRPVILHRAILGSFERFIGILIEHYSGKLPIWLAPIQVAVVSITDEAVNYAKQLHQELIDNNIRSTLDISNQKINYKIRNFFTAKVPLIAILGKKESESGKIAIRTLGSQEQHVISSSELIAHIRKNKK</sequence>
<name>SYT_ORITI</name>
<protein>
    <recommendedName>
        <fullName evidence="1">Threonine--tRNA ligase</fullName>
        <ecNumber evidence="1">6.1.1.3</ecNumber>
    </recommendedName>
    <alternativeName>
        <fullName evidence="1">Threonyl-tRNA synthetase</fullName>
        <shortName evidence="1">ThrRS</shortName>
    </alternativeName>
</protein>
<reference key="1">
    <citation type="journal article" date="2008" name="DNA Res.">
        <title>The whole-genome sequencing of the obligate intracellular bacterium Orientia tsutsugamushi revealed massive gene amplification during reductive genome evolution.</title>
        <authorList>
            <person name="Nakayama K."/>
            <person name="Yamashita A."/>
            <person name="Kurokawa K."/>
            <person name="Morimoto T."/>
            <person name="Ogawa M."/>
            <person name="Fukuhara M."/>
            <person name="Urakami H."/>
            <person name="Ohnishi M."/>
            <person name="Uchiyama I."/>
            <person name="Ogura Y."/>
            <person name="Ooka T."/>
            <person name="Oshima K."/>
            <person name="Tamura A."/>
            <person name="Hattori M."/>
            <person name="Hayashi T."/>
        </authorList>
    </citation>
    <scope>NUCLEOTIDE SEQUENCE [LARGE SCALE GENOMIC DNA]</scope>
    <source>
        <strain>Ikeda</strain>
    </source>
</reference>
<organism>
    <name type="scientific">Orientia tsutsugamushi (strain Ikeda)</name>
    <name type="common">Rickettsia tsutsugamushi</name>
    <dbReference type="NCBI Taxonomy" id="334380"/>
    <lineage>
        <taxon>Bacteria</taxon>
        <taxon>Pseudomonadati</taxon>
        <taxon>Pseudomonadota</taxon>
        <taxon>Alphaproteobacteria</taxon>
        <taxon>Rickettsiales</taxon>
        <taxon>Rickettsiaceae</taxon>
        <taxon>Rickettsieae</taxon>
        <taxon>Orientia</taxon>
    </lineage>
</organism>
<evidence type="ECO:0000255" key="1">
    <source>
        <dbReference type="HAMAP-Rule" id="MF_00184"/>
    </source>
</evidence>
<evidence type="ECO:0000255" key="2">
    <source>
        <dbReference type="PROSITE-ProRule" id="PRU01228"/>
    </source>
</evidence>
<gene>
    <name evidence="1" type="primary">thrS</name>
    <name type="ordered locus">OTT_0964</name>
</gene>
<dbReference type="EC" id="6.1.1.3" evidence="1"/>
<dbReference type="EMBL" id="AP008981">
    <property type="protein sequence ID" value="BAG40422.1"/>
    <property type="molecule type" value="Genomic_DNA"/>
</dbReference>
<dbReference type="RefSeq" id="WP_012461547.1">
    <property type="nucleotide sequence ID" value="NC_010793.1"/>
</dbReference>
<dbReference type="SMR" id="B3CSS5"/>
<dbReference type="KEGG" id="ott:OTT_0964"/>
<dbReference type="HOGENOM" id="CLU_008554_0_1_5"/>
<dbReference type="OrthoDB" id="9802304at2"/>
<dbReference type="Proteomes" id="UP000001033">
    <property type="component" value="Chromosome"/>
</dbReference>
<dbReference type="GO" id="GO:0005737">
    <property type="term" value="C:cytoplasm"/>
    <property type="evidence" value="ECO:0007669"/>
    <property type="project" value="UniProtKB-SubCell"/>
</dbReference>
<dbReference type="GO" id="GO:0005524">
    <property type="term" value="F:ATP binding"/>
    <property type="evidence" value="ECO:0007669"/>
    <property type="project" value="UniProtKB-UniRule"/>
</dbReference>
<dbReference type="GO" id="GO:0046872">
    <property type="term" value="F:metal ion binding"/>
    <property type="evidence" value="ECO:0007669"/>
    <property type="project" value="UniProtKB-KW"/>
</dbReference>
<dbReference type="GO" id="GO:0004829">
    <property type="term" value="F:threonine-tRNA ligase activity"/>
    <property type="evidence" value="ECO:0007669"/>
    <property type="project" value="UniProtKB-UniRule"/>
</dbReference>
<dbReference type="GO" id="GO:0000049">
    <property type="term" value="F:tRNA binding"/>
    <property type="evidence" value="ECO:0007669"/>
    <property type="project" value="UniProtKB-KW"/>
</dbReference>
<dbReference type="GO" id="GO:0006435">
    <property type="term" value="P:threonyl-tRNA aminoacylation"/>
    <property type="evidence" value="ECO:0007669"/>
    <property type="project" value="UniProtKB-UniRule"/>
</dbReference>
<dbReference type="CDD" id="cd01667">
    <property type="entry name" value="TGS_ThrRS"/>
    <property type="match status" value="1"/>
</dbReference>
<dbReference type="CDD" id="cd00860">
    <property type="entry name" value="ThrRS_anticodon"/>
    <property type="match status" value="1"/>
</dbReference>
<dbReference type="CDD" id="cd00771">
    <property type="entry name" value="ThrRS_core"/>
    <property type="match status" value="1"/>
</dbReference>
<dbReference type="FunFam" id="3.30.54.20:FF:000002">
    <property type="entry name" value="Threonine--tRNA ligase"/>
    <property type="match status" value="1"/>
</dbReference>
<dbReference type="FunFam" id="3.30.930.10:FF:000002">
    <property type="entry name" value="Threonine--tRNA ligase"/>
    <property type="match status" value="1"/>
</dbReference>
<dbReference type="FunFam" id="3.40.50.800:FF:000001">
    <property type="entry name" value="Threonine--tRNA ligase"/>
    <property type="match status" value="1"/>
</dbReference>
<dbReference type="FunFam" id="3.30.980.10:FF:000005">
    <property type="entry name" value="Threonyl-tRNA synthetase, mitochondrial"/>
    <property type="match status" value="1"/>
</dbReference>
<dbReference type="Gene3D" id="3.10.20.30">
    <property type="match status" value="1"/>
</dbReference>
<dbReference type="Gene3D" id="3.30.54.20">
    <property type="match status" value="1"/>
</dbReference>
<dbReference type="Gene3D" id="3.40.50.800">
    <property type="entry name" value="Anticodon-binding domain"/>
    <property type="match status" value="1"/>
</dbReference>
<dbReference type="Gene3D" id="3.30.930.10">
    <property type="entry name" value="Bira Bifunctional Protein, Domain 2"/>
    <property type="match status" value="1"/>
</dbReference>
<dbReference type="Gene3D" id="3.30.980.10">
    <property type="entry name" value="Threonyl-trna Synthetase, Chain A, domain 2"/>
    <property type="match status" value="1"/>
</dbReference>
<dbReference type="HAMAP" id="MF_00184">
    <property type="entry name" value="Thr_tRNA_synth"/>
    <property type="match status" value="1"/>
</dbReference>
<dbReference type="InterPro" id="IPR002314">
    <property type="entry name" value="aa-tRNA-synt_IIb"/>
</dbReference>
<dbReference type="InterPro" id="IPR006195">
    <property type="entry name" value="aa-tRNA-synth_II"/>
</dbReference>
<dbReference type="InterPro" id="IPR045864">
    <property type="entry name" value="aa-tRNA-synth_II/BPL/LPL"/>
</dbReference>
<dbReference type="InterPro" id="IPR004154">
    <property type="entry name" value="Anticodon-bd"/>
</dbReference>
<dbReference type="InterPro" id="IPR036621">
    <property type="entry name" value="Anticodon-bd_dom_sf"/>
</dbReference>
<dbReference type="InterPro" id="IPR012675">
    <property type="entry name" value="Beta-grasp_dom_sf"/>
</dbReference>
<dbReference type="InterPro" id="IPR004095">
    <property type="entry name" value="TGS"/>
</dbReference>
<dbReference type="InterPro" id="IPR012676">
    <property type="entry name" value="TGS-like"/>
</dbReference>
<dbReference type="InterPro" id="IPR002320">
    <property type="entry name" value="Thr-tRNA-ligase_IIa"/>
</dbReference>
<dbReference type="InterPro" id="IPR018163">
    <property type="entry name" value="Thr/Ala-tRNA-synth_IIc_edit"/>
</dbReference>
<dbReference type="InterPro" id="IPR047246">
    <property type="entry name" value="ThrRS_anticodon"/>
</dbReference>
<dbReference type="InterPro" id="IPR033728">
    <property type="entry name" value="ThrRS_core"/>
</dbReference>
<dbReference type="InterPro" id="IPR012947">
    <property type="entry name" value="tRNA_SAD"/>
</dbReference>
<dbReference type="NCBIfam" id="TIGR00418">
    <property type="entry name" value="thrS"/>
    <property type="match status" value="1"/>
</dbReference>
<dbReference type="PANTHER" id="PTHR11451:SF44">
    <property type="entry name" value="THREONINE--TRNA LIGASE, CHLOROPLASTIC_MITOCHONDRIAL 2"/>
    <property type="match status" value="1"/>
</dbReference>
<dbReference type="PANTHER" id="PTHR11451">
    <property type="entry name" value="THREONINE-TRNA LIGASE"/>
    <property type="match status" value="1"/>
</dbReference>
<dbReference type="Pfam" id="PF03129">
    <property type="entry name" value="HGTP_anticodon"/>
    <property type="match status" value="1"/>
</dbReference>
<dbReference type="Pfam" id="PF00587">
    <property type="entry name" value="tRNA-synt_2b"/>
    <property type="match status" value="1"/>
</dbReference>
<dbReference type="Pfam" id="PF07973">
    <property type="entry name" value="tRNA_SAD"/>
    <property type="match status" value="1"/>
</dbReference>
<dbReference type="PRINTS" id="PR01047">
    <property type="entry name" value="TRNASYNTHTHR"/>
</dbReference>
<dbReference type="SMART" id="SM00863">
    <property type="entry name" value="tRNA_SAD"/>
    <property type="match status" value="1"/>
</dbReference>
<dbReference type="SUPFAM" id="SSF52954">
    <property type="entry name" value="Class II aaRS ABD-related"/>
    <property type="match status" value="1"/>
</dbReference>
<dbReference type="SUPFAM" id="SSF55681">
    <property type="entry name" value="Class II aaRS and biotin synthetases"/>
    <property type="match status" value="1"/>
</dbReference>
<dbReference type="SUPFAM" id="SSF81271">
    <property type="entry name" value="TGS-like"/>
    <property type="match status" value="1"/>
</dbReference>
<dbReference type="SUPFAM" id="SSF55186">
    <property type="entry name" value="ThrRS/AlaRS common domain"/>
    <property type="match status" value="1"/>
</dbReference>
<dbReference type="PROSITE" id="PS50862">
    <property type="entry name" value="AA_TRNA_LIGASE_II"/>
    <property type="match status" value="1"/>
</dbReference>
<dbReference type="PROSITE" id="PS51880">
    <property type="entry name" value="TGS"/>
    <property type="match status" value="1"/>
</dbReference>
<feature type="chain" id="PRO_1000098590" description="Threonine--tRNA ligase">
    <location>
        <begin position="1"/>
        <end position="648"/>
    </location>
</feature>
<feature type="domain" description="TGS" evidence="2">
    <location>
        <begin position="1"/>
        <end position="61"/>
    </location>
</feature>
<feature type="region of interest" description="Catalytic" evidence="1">
    <location>
        <begin position="243"/>
        <end position="549"/>
    </location>
</feature>
<feature type="binding site" evidence="1">
    <location>
        <position position="349"/>
    </location>
    <ligand>
        <name>Zn(2+)</name>
        <dbReference type="ChEBI" id="CHEBI:29105"/>
    </ligand>
</feature>
<feature type="binding site" evidence="1">
    <location>
        <position position="400"/>
    </location>
    <ligand>
        <name>Zn(2+)</name>
        <dbReference type="ChEBI" id="CHEBI:29105"/>
    </ligand>
</feature>
<feature type="binding site" evidence="1">
    <location>
        <position position="526"/>
    </location>
    <ligand>
        <name>Zn(2+)</name>
        <dbReference type="ChEBI" id="CHEBI:29105"/>
    </ligand>
</feature>
<comment type="function">
    <text evidence="1">Catalyzes the attachment of threonine to tRNA(Thr) in a two-step reaction: L-threonine is first activated by ATP to form Thr-AMP and then transferred to the acceptor end of tRNA(Thr). Also edits incorrectly charged L-seryl-tRNA(Thr).</text>
</comment>
<comment type="catalytic activity">
    <reaction evidence="1">
        <text>tRNA(Thr) + L-threonine + ATP = L-threonyl-tRNA(Thr) + AMP + diphosphate + H(+)</text>
        <dbReference type="Rhea" id="RHEA:24624"/>
        <dbReference type="Rhea" id="RHEA-COMP:9670"/>
        <dbReference type="Rhea" id="RHEA-COMP:9704"/>
        <dbReference type="ChEBI" id="CHEBI:15378"/>
        <dbReference type="ChEBI" id="CHEBI:30616"/>
        <dbReference type="ChEBI" id="CHEBI:33019"/>
        <dbReference type="ChEBI" id="CHEBI:57926"/>
        <dbReference type="ChEBI" id="CHEBI:78442"/>
        <dbReference type="ChEBI" id="CHEBI:78534"/>
        <dbReference type="ChEBI" id="CHEBI:456215"/>
        <dbReference type="EC" id="6.1.1.3"/>
    </reaction>
</comment>
<comment type="cofactor">
    <cofactor evidence="1">
        <name>Zn(2+)</name>
        <dbReference type="ChEBI" id="CHEBI:29105"/>
    </cofactor>
    <text evidence="1">Binds 1 zinc ion per subunit.</text>
</comment>
<comment type="subunit">
    <text evidence="1">Homodimer.</text>
</comment>
<comment type="subcellular location">
    <subcellularLocation>
        <location evidence="1">Cytoplasm</location>
    </subcellularLocation>
</comment>
<comment type="similarity">
    <text evidence="1">Belongs to the class-II aminoacyl-tRNA synthetase family.</text>
</comment>
<proteinExistence type="inferred from homology"/>